<protein>
    <recommendedName>
        <fullName>Protein PAT1 homolog 1</fullName>
    </recommendedName>
    <alternativeName>
        <fullName>PAT1-like protein 1</fullName>
    </alternativeName>
    <alternativeName>
        <fullName>Protein PAT1 homolog b</fullName>
        <shortName>Pat1b</shortName>
        <shortName>hPat1b</shortName>
    </alternativeName>
</protein>
<feature type="chain" id="PRO_0000320963" description="Protein PAT1 homolog 1">
    <location>
        <begin position="1"/>
        <end position="770"/>
    </location>
</feature>
<feature type="region of interest" description="Involved in nuclear foci localization">
    <location>
        <begin position="1"/>
        <end position="397"/>
    </location>
</feature>
<feature type="region of interest" description="Region A; interaction with DDX6/RCK">
    <location>
        <begin position="1"/>
        <end position="84"/>
    </location>
</feature>
<feature type="region of interest" description="Disordered" evidence="2">
    <location>
        <begin position="1"/>
        <end position="26"/>
    </location>
</feature>
<feature type="region of interest" description="Region N; interaction with decapping machinery">
    <location>
        <begin position="85"/>
        <end position="388"/>
    </location>
</feature>
<feature type="region of interest" description="Involved in RNA-binding">
    <location>
        <begin position="223"/>
        <end position="397"/>
    </location>
</feature>
<feature type="region of interest" description="Disordered" evidence="2">
    <location>
        <begin position="314"/>
        <end position="344"/>
    </location>
</feature>
<feature type="region of interest" description="Disordered" evidence="2">
    <location>
        <begin position="360"/>
        <end position="399"/>
    </location>
</feature>
<feature type="region of interest" description="Region H">
    <location>
        <begin position="389"/>
        <end position="448"/>
    </location>
</feature>
<feature type="region of interest" description="Involved in nuclear speckle localization">
    <location>
        <begin position="398"/>
        <end position="770"/>
    </location>
</feature>
<feature type="region of interest" description="Region C">
    <location>
        <begin position="449"/>
        <end position="770"/>
    </location>
</feature>
<feature type="short sequence motif" description="Nuclear export signal">
    <location>
        <begin position="86"/>
        <end position="95"/>
    </location>
</feature>
<feature type="compositionally biased region" description="Acidic residues" evidence="2">
    <location>
        <begin position="7"/>
        <end position="26"/>
    </location>
</feature>
<feature type="compositionally biased region" description="Low complexity" evidence="2">
    <location>
        <begin position="314"/>
        <end position="323"/>
    </location>
</feature>
<feature type="compositionally biased region" description="Pro residues" evidence="2">
    <location>
        <begin position="324"/>
        <end position="337"/>
    </location>
</feature>
<feature type="compositionally biased region" description="Low complexity" evidence="2">
    <location>
        <begin position="367"/>
        <end position="380"/>
    </location>
</feature>
<feature type="compositionally biased region" description="Basic and acidic residues" evidence="2">
    <location>
        <begin position="385"/>
        <end position="399"/>
    </location>
</feature>
<feature type="modified residue" description="Phosphoserine" evidence="18">
    <location>
        <position position="177"/>
    </location>
</feature>
<feature type="modified residue" description="Phosphothreonine" evidence="1">
    <location>
        <position position="178"/>
    </location>
</feature>
<feature type="modified residue" description="Phosphoserine" evidence="18 19 20">
    <location>
        <position position="179"/>
    </location>
</feature>
<feature type="modified residue" description="Phosphoserine" evidence="18 19 20">
    <location>
        <position position="184"/>
    </location>
</feature>
<feature type="modified residue" description="Phosphothreonine" evidence="20">
    <location>
        <position position="194"/>
    </location>
</feature>
<feature type="modified residue" description="Asymmetric dimethylarginine" evidence="21">
    <location>
        <position position="217"/>
    </location>
</feature>
<feature type="modified residue" description="Asymmetric dimethylarginine" evidence="21">
    <location>
        <position position="223"/>
    </location>
</feature>
<feature type="modified residue" description="Asymmetric dimethylarginine" evidence="21">
    <location>
        <position position="263"/>
    </location>
</feature>
<feature type="modified residue" description="Phosphoserine" evidence="20">
    <location>
        <position position="278"/>
    </location>
</feature>
<feature type="modified residue" description="Asymmetric dimethylarginine" evidence="1">
    <location>
        <position position="284"/>
    </location>
</feature>
<feature type="modified residue" description="Omega-N-methylarginine" evidence="1">
    <location>
        <position position="385"/>
    </location>
</feature>
<feature type="splice variant" id="VSP_031777" description="In isoform 3." evidence="16">
    <location>
        <begin position="1"/>
        <end position="659"/>
    </location>
</feature>
<feature type="splice variant" id="VSP_031778" description="In isoform 2." evidence="14 15">
    <location>
        <begin position="1"/>
        <end position="143"/>
    </location>
</feature>
<feature type="splice variant" id="VSP_040576" description="In isoform 4." evidence="14">
    <location>
        <begin position="242"/>
        <end position="271"/>
    </location>
</feature>
<feature type="splice variant" id="VSP_040577" description="In isoform 4." evidence="14">
    <location>
        <begin position="662"/>
        <end position="698"/>
    </location>
</feature>
<feature type="mutagenesis site" description="Loss of nuclear export; when associated with A-90, A-93 and A-95." evidence="9">
    <original>L</original>
    <variation>A</variation>
    <location>
        <position position="86"/>
    </location>
</feature>
<feature type="mutagenesis site" description="Loss of nuclear export; when associated with A-86, A-93 and A-95." evidence="9">
    <original>L</original>
    <variation>A</variation>
    <location>
        <position position="90"/>
    </location>
</feature>
<feature type="mutagenesis site" description="Loss of nuclear export; when associated with A-86, A-90 and A-95." evidence="9">
    <original>M</original>
    <variation>A</variation>
    <location>
        <position position="93"/>
    </location>
</feature>
<feature type="mutagenesis site" description="Loss of nuclear export; when associated with A-86, A-90 and A-93." evidence="9">
    <original>I</original>
    <variation>A</variation>
    <location>
        <position position="95"/>
    </location>
</feature>
<feature type="mutagenesis site" description="In mut1; Abolishes RNA-binding, localization to P-body and interaction with the decapping machinery; when associated with A-520; A-591; A-595; A-625 and A-626." evidence="5">
    <original>R</original>
    <variation>A</variation>
    <location>
        <position position="519"/>
    </location>
</feature>
<feature type="mutagenesis site" description="In mut1; Abolishes RNA-binding, localization to P-body and interaction with the decapping machinery; when associated with A-519; A-591; A-595; A-625 and A-626." evidence="5">
    <original>R</original>
    <variation>A</variation>
    <location>
        <position position="520"/>
    </location>
</feature>
<feature type="mutagenesis site" description="In mut2; Abolishes interaction with the decapping machinery and localization to P-body; when associated with A-527; A-530 and S-534." evidence="5">
    <original>L</original>
    <variation>A</variation>
    <location>
        <position position="523"/>
    </location>
</feature>
<feature type="mutagenesis site" description="In mut2; Abolishes interaction with the decapping machinery and localization to P-body; when associated with S-523; A-530 and S-534." evidence="5">
    <original>E</original>
    <variation>A</variation>
    <location>
        <position position="527"/>
    </location>
</feature>
<feature type="mutagenesis site" description="In mut2; Abolishes interaction with the decapping machinery and localization to P-body; when associated with S-523; A-527 and S-534." evidence="5">
    <original>Y</original>
    <variation>A</variation>
    <location>
        <position position="530"/>
    </location>
</feature>
<feature type="mutagenesis site" description="In mut2; Abolishes interaction with the decapping machinery and localization to P-body; when associated with S-523; A-527 and A-530." evidence="5">
    <original>L</original>
    <variation>S</variation>
    <location>
        <position position="534"/>
    </location>
</feature>
<feature type="mutagenesis site" description="In mut3; does not affect neither RNA-binding,interaction with the decapping machinery, nor localization to P-body." evidence="5">
    <original>YERRYLLSLEEERPALMDD</original>
    <variation>GSGSGSG</variation>
    <location>
        <begin position="539"/>
        <end position="557"/>
    </location>
</feature>
<feature type="mutagenesis site" description="In mut1; Abolishes RNA-binding, localization to P-body and interaction with the decapping machinery; when associated with A-519; A-520; A-595; A-625 and A-626." evidence="5">
    <original>R</original>
    <variation>A</variation>
    <location>
        <position position="591"/>
    </location>
</feature>
<feature type="mutagenesis site" description="In mut1; Abolishes RNA-binding, localization to P-body and interaction with the decapping machinery; when associated with A-519; A-520; A-591; A-625 and A-626." evidence="5">
    <original>R</original>
    <variation>A</variation>
    <location>
        <position position="595"/>
    </location>
</feature>
<feature type="mutagenesis site" description="In mut1; Abolishes RNA-binding, localization to P-body and interaction with the decapping machinery; when associated with A-519; A-520; A-591; A-595 and A-626." evidence="5">
    <original>K</original>
    <variation>A</variation>
    <location>
        <position position="625"/>
    </location>
</feature>
<feature type="mutagenesis site" description="In mut1; Abolishes RNA-binding, localization to P-body and interaction with the decapping machinery; when associated with A-519; A-520; A-591; A-595 and A-625." evidence="5">
    <original>K</original>
    <variation>A</variation>
    <location>
        <position position="626"/>
    </location>
</feature>
<feature type="sequence conflict" description="In Ref. 2; BAG54601." evidence="17" ref="2">
    <original>Q</original>
    <variation>H</variation>
    <location>
        <position position="160"/>
    </location>
</feature>
<feature type="sequence conflict" description="In Ref. 2; BAC04305 and 3; CAD89916." evidence="17" ref="2 3">
    <original>K</original>
    <variation>R</variation>
    <location>
        <position position="735"/>
    </location>
</feature>
<feature type="helix" evidence="23">
    <location>
        <begin position="518"/>
        <end position="544"/>
    </location>
</feature>
<feature type="helix" evidence="23">
    <location>
        <begin position="548"/>
        <end position="550"/>
    </location>
</feature>
<feature type="helix" evidence="23">
    <location>
        <begin position="551"/>
        <end position="570"/>
    </location>
</feature>
<feature type="strand" evidence="22">
    <location>
        <begin position="574"/>
        <end position="576"/>
    </location>
</feature>
<feature type="helix" evidence="23">
    <location>
        <begin position="582"/>
        <end position="588"/>
    </location>
</feature>
<feature type="helix" evidence="23">
    <location>
        <begin position="591"/>
        <end position="600"/>
    </location>
</feature>
<feature type="helix" evidence="23">
    <location>
        <begin position="601"/>
        <end position="603"/>
    </location>
</feature>
<feature type="helix" evidence="23">
    <location>
        <begin position="606"/>
        <end position="618"/>
    </location>
</feature>
<feature type="helix" evidence="23">
    <location>
        <begin position="620"/>
        <end position="626"/>
    </location>
</feature>
<feature type="turn" evidence="23">
    <location>
        <begin position="627"/>
        <end position="630"/>
    </location>
</feature>
<feature type="helix" evidence="23">
    <location>
        <begin position="633"/>
        <end position="636"/>
    </location>
</feature>
<feature type="helix" evidence="23">
    <location>
        <begin position="637"/>
        <end position="644"/>
    </location>
</feature>
<feature type="helix" evidence="23">
    <location>
        <begin position="649"/>
        <end position="659"/>
    </location>
</feature>
<feature type="turn" evidence="23">
    <location>
        <begin position="663"/>
        <end position="665"/>
    </location>
</feature>
<feature type="helix" evidence="23">
    <location>
        <begin position="677"/>
        <end position="680"/>
    </location>
</feature>
<feature type="helix" evidence="23">
    <location>
        <begin position="683"/>
        <end position="700"/>
    </location>
</feature>
<feature type="helix" evidence="23">
    <location>
        <begin position="712"/>
        <end position="727"/>
    </location>
</feature>
<feature type="helix" evidence="23">
    <location>
        <begin position="730"/>
        <end position="732"/>
    </location>
</feature>
<feature type="helix" evidence="23">
    <location>
        <begin position="743"/>
        <end position="750"/>
    </location>
</feature>
<feature type="helix" evidence="23">
    <location>
        <begin position="753"/>
        <end position="762"/>
    </location>
</feature>
<name>PATL1_HUMAN</name>
<organism>
    <name type="scientific">Homo sapiens</name>
    <name type="common">Human</name>
    <dbReference type="NCBI Taxonomy" id="9606"/>
    <lineage>
        <taxon>Eukaryota</taxon>
        <taxon>Metazoa</taxon>
        <taxon>Chordata</taxon>
        <taxon>Craniata</taxon>
        <taxon>Vertebrata</taxon>
        <taxon>Euteleostomi</taxon>
        <taxon>Mammalia</taxon>
        <taxon>Eutheria</taxon>
        <taxon>Euarchontoglires</taxon>
        <taxon>Primates</taxon>
        <taxon>Haplorrhini</taxon>
        <taxon>Catarrhini</taxon>
        <taxon>Hominidae</taxon>
        <taxon>Homo</taxon>
    </lineage>
</organism>
<reference key="1">
    <citation type="submission" date="2001-07" db="EMBL/GenBank/DDBJ databases">
        <title>Genes encoded epitopes recognized by CTL established from TIL of colon cancer.</title>
        <authorList>
            <person name="Nonaka Y."/>
            <person name="Shichijo S."/>
            <person name="Itoh K."/>
        </authorList>
    </citation>
    <scope>NUCLEOTIDE SEQUENCE [LARGE SCALE MRNA] (ISOFORM 3)</scope>
    <source>
        <tissue>Glial tumor</tissue>
    </source>
</reference>
<reference key="2">
    <citation type="journal article" date="2004" name="Nat. Genet.">
        <title>Complete sequencing and characterization of 21,243 full-length human cDNAs.</title>
        <authorList>
            <person name="Ota T."/>
            <person name="Suzuki Y."/>
            <person name="Nishikawa T."/>
            <person name="Otsuki T."/>
            <person name="Sugiyama T."/>
            <person name="Irie R."/>
            <person name="Wakamatsu A."/>
            <person name="Hayashi K."/>
            <person name="Sato H."/>
            <person name="Nagai K."/>
            <person name="Kimura K."/>
            <person name="Makita H."/>
            <person name="Sekine M."/>
            <person name="Obayashi M."/>
            <person name="Nishi T."/>
            <person name="Shibahara T."/>
            <person name="Tanaka T."/>
            <person name="Ishii S."/>
            <person name="Yamamoto J."/>
            <person name="Saito K."/>
            <person name="Kawai Y."/>
            <person name="Isono Y."/>
            <person name="Nakamura Y."/>
            <person name="Nagahari K."/>
            <person name="Murakami K."/>
            <person name="Yasuda T."/>
            <person name="Iwayanagi T."/>
            <person name="Wagatsuma M."/>
            <person name="Shiratori A."/>
            <person name="Sudo H."/>
            <person name="Hosoiri T."/>
            <person name="Kaku Y."/>
            <person name="Kodaira H."/>
            <person name="Kondo H."/>
            <person name="Sugawara M."/>
            <person name="Takahashi M."/>
            <person name="Kanda K."/>
            <person name="Yokoi T."/>
            <person name="Furuya T."/>
            <person name="Kikkawa E."/>
            <person name="Omura Y."/>
            <person name="Abe K."/>
            <person name="Kamihara K."/>
            <person name="Katsuta N."/>
            <person name="Sato K."/>
            <person name="Tanikawa M."/>
            <person name="Yamazaki M."/>
            <person name="Ninomiya K."/>
            <person name="Ishibashi T."/>
            <person name="Yamashita H."/>
            <person name="Murakawa K."/>
            <person name="Fujimori K."/>
            <person name="Tanai H."/>
            <person name="Kimata M."/>
            <person name="Watanabe M."/>
            <person name="Hiraoka S."/>
            <person name="Chiba Y."/>
            <person name="Ishida S."/>
            <person name="Ono Y."/>
            <person name="Takiguchi S."/>
            <person name="Watanabe S."/>
            <person name="Yosida M."/>
            <person name="Hotuta T."/>
            <person name="Kusano J."/>
            <person name="Kanehori K."/>
            <person name="Takahashi-Fujii A."/>
            <person name="Hara H."/>
            <person name="Tanase T.-O."/>
            <person name="Nomura Y."/>
            <person name="Togiya S."/>
            <person name="Komai F."/>
            <person name="Hara R."/>
            <person name="Takeuchi K."/>
            <person name="Arita M."/>
            <person name="Imose N."/>
            <person name="Musashino K."/>
            <person name="Yuuki H."/>
            <person name="Oshima A."/>
            <person name="Sasaki N."/>
            <person name="Aotsuka S."/>
            <person name="Yoshikawa Y."/>
            <person name="Matsunawa H."/>
            <person name="Ichihara T."/>
            <person name="Shiohata N."/>
            <person name="Sano S."/>
            <person name="Moriya S."/>
            <person name="Momiyama H."/>
            <person name="Satoh N."/>
            <person name="Takami S."/>
            <person name="Terashima Y."/>
            <person name="Suzuki O."/>
            <person name="Nakagawa S."/>
            <person name="Senoh A."/>
            <person name="Mizoguchi H."/>
            <person name="Goto Y."/>
            <person name="Shimizu F."/>
            <person name="Wakebe H."/>
            <person name="Hishigaki H."/>
            <person name="Watanabe T."/>
            <person name="Sugiyama A."/>
            <person name="Takemoto M."/>
            <person name="Kawakami B."/>
            <person name="Yamazaki M."/>
            <person name="Watanabe K."/>
            <person name="Kumagai A."/>
            <person name="Itakura S."/>
            <person name="Fukuzumi Y."/>
            <person name="Fujimori Y."/>
            <person name="Komiyama M."/>
            <person name="Tashiro H."/>
            <person name="Tanigami A."/>
            <person name="Fujiwara T."/>
            <person name="Ono T."/>
            <person name="Yamada K."/>
            <person name="Fujii Y."/>
            <person name="Ozaki K."/>
            <person name="Hirao M."/>
            <person name="Ohmori Y."/>
            <person name="Kawabata A."/>
            <person name="Hikiji T."/>
            <person name="Kobatake N."/>
            <person name="Inagaki H."/>
            <person name="Ikema Y."/>
            <person name="Okamoto S."/>
            <person name="Okitani R."/>
            <person name="Kawakami T."/>
            <person name="Noguchi S."/>
            <person name="Itoh T."/>
            <person name="Shigeta K."/>
            <person name="Senba T."/>
            <person name="Matsumura K."/>
            <person name="Nakajima Y."/>
            <person name="Mizuno T."/>
            <person name="Morinaga M."/>
            <person name="Sasaki M."/>
            <person name="Togashi T."/>
            <person name="Oyama M."/>
            <person name="Hata H."/>
            <person name="Watanabe M."/>
            <person name="Komatsu T."/>
            <person name="Mizushima-Sugano J."/>
            <person name="Satoh T."/>
            <person name="Shirai Y."/>
            <person name="Takahashi Y."/>
            <person name="Nakagawa K."/>
            <person name="Okumura K."/>
            <person name="Nagase T."/>
            <person name="Nomura N."/>
            <person name="Kikuchi H."/>
            <person name="Masuho Y."/>
            <person name="Yamashita R."/>
            <person name="Nakai K."/>
            <person name="Yada T."/>
            <person name="Nakamura Y."/>
            <person name="Ohara O."/>
            <person name="Isogai T."/>
            <person name="Sugano S."/>
        </authorList>
    </citation>
    <scope>NUCLEOTIDE SEQUENCE [LARGE SCALE MRNA] (ISOFORMS 2 AND 4)</scope>
    <source>
        <tissue>Synovium</tissue>
    </source>
</reference>
<reference key="3">
    <citation type="journal article" date="2007" name="BMC Genomics">
        <title>The full-ORF clone resource of the German cDNA consortium.</title>
        <authorList>
            <person name="Bechtel S."/>
            <person name="Rosenfelder H."/>
            <person name="Duda A."/>
            <person name="Schmidt C.P."/>
            <person name="Ernst U."/>
            <person name="Wellenreuther R."/>
            <person name="Mehrle A."/>
            <person name="Schuster C."/>
            <person name="Bahr A."/>
            <person name="Bloecker H."/>
            <person name="Heubner D."/>
            <person name="Hoerlein A."/>
            <person name="Michel G."/>
            <person name="Wedler H."/>
            <person name="Koehrer K."/>
            <person name="Ottenwaelder B."/>
            <person name="Poustka A."/>
            <person name="Wiemann S."/>
            <person name="Schupp I."/>
        </authorList>
    </citation>
    <scope>NUCLEOTIDE SEQUENCE [LARGE SCALE MRNA] (ISOFORM 1)</scope>
    <source>
        <tissue>Skeletal muscle</tissue>
    </source>
</reference>
<reference key="4">
    <citation type="journal article" date="2006" name="Nature">
        <title>Human chromosome 11 DNA sequence and analysis including novel gene identification.</title>
        <authorList>
            <person name="Taylor T.D."/>
            <person name="Noguchi H."/>
            <person name="Totoki Y."/>
            <person name="Toyoda A."/>
            <person name="Kuroki Y."/>
            <person name="Dewar K."/>
            <person name="Lloyd C."/>
            <person name="Itoh T."/>
            <person name="Takeda T."/>
            <person name="Kim D.-W."/>
            <person name="She X."/>
            <person name="Barlow K.F."/>
            <person name="Bloom T."/>
            <person name="Bruford E."/>
            <person name="Chang J.L."/>
            <person name="Cuomo C.A."/>
            <person name="Eichler E."/>
            <person name="FitzGerald M.G."/>
            <person name="Jaffe D.B."/>
            <person name="LaButti K."/>
            <person name="Nicol R."/>
            <person name="Park H.-S."/>
            <person name="Seaman C."/>
            <person name="Sougnez C."/>
            <person name="Yang X."/>
            <person name="Zimmer A.R."/>
            <person name="Zody M.C."/>
            <person name="Birren B.W."/>
            <person name="Nusbaum C."/>
            <person name="Fujiyama A."/>
            <person name="Hattori M."/>
            <person name="Rogers J."/>
            <person name="Lander E.S."/>
            <person name="Sakaki Y."/>
        </authorList>
    </citation>
    <scope>NUCLEOTIDE SEQUENCE [LARGE SCALE GENOMIC DNA]</scope>
</reference>
<reference key="5">
    <citation type="journal article" date="2004" name="Genome Res.">
        <title>The status, quality, and expansion of the NIH full-length cDNA project: the Mammalian Gene Collection (MGC).</title>
        <authorList>
            <consortium name="The MGC Project Team"/>
        </authorList>
    </citation>
    <scope>NUCLEOTIDE SEQUENCE [LARGE SCALE MRNA] (ISOFORM 2)</scope>
    <scope>NUCLEOTIDE SEQUENCE [LARGE SCALE MRNA] OF 66-770 (ISOFORM 1)</scope>
    <source>
        <tissue>Eye</tissue>
        <tissue>Uterus</tissue>
    </source>
</reference>
<reference key="6">
    <citation type="journal article" date="2007" name="Biochim. Biophys. Acta">
        <title>Identification of PatL1, a human homolog to yeast P body component Pat1.</title>
        <authorList>
            <person name="Scheller N."/>
            <person name="Resa-Infante P."/>
            <person name="de la Luna S."/>
            <person name="Galao R.P."/>
            <person name="Albrecht M."/>
            <person name="Kaestner L."/>
            <person name="Lipp P."/>
            <person name="Lengauer T."/>
            <person name="Meyerhans A."/>
            <person name="Diez J."/>
        </authorList>
    </citation>
    <scope>FUNCTION</scope>
    <scope>SUBCELLULAR LOCATION</scope>
    <scope>TISSUE SPECIFICITY</scope>
</reference>
<reference key="7">
    <citation type="journal article" date="2008" name="Proc. Natl. Acad. Sci. U.S.A.">
        <title>A quantitative atlas of mitotic phosphorylation.</title>
        <authorList>
            <person name="Dephoure N."/>
            <person name="Zhou C."/>
            <person name="Villen J."/>
            <person name="Beausoleil S.A."/>
            <person name="Bakalarski C.E."/>
            <person name="Elledge S.J."/>
            <person name="Gygi S.P."/>
        </authorList>
    </citation>
    <scope>PHOSPHORYLATION [LARGE SCALE ANALYSIS] AT SER-177; SER-179 AND SER-184</scope>
    <scope>IDENTIFICATION BY MASS SPECTROMETRY [LARGE SCALE ANALYSIS]</scope>
    <source>
        <tissue>Cervix carcinoma</tissue>
    </source>
</reference>
<reference key="8">
    <citation type="journal article" date="2009" name="Proc. Natl. Acad. Sci. U.S.A.">
        <title>Translation and replication of hepatitis C virus genomic RNA depends on ancient cellular proteins that control mRNA fates.</title>
        <authorList>
            <person name="Scheller N."/>
            <person name="Mina L.B."/>
            <person name="Galao R.P."/>
            <person name="Chari A."/>
            <person name="Gimenez-Barcons M."/>
            <person name="Noueiry A."/>
            <person name="Fischer U."/>
            <person name="Meyerhans A."/>
            <person name="Diez J."/>
        </authorList>
    </citation>
    <scope>FUNCTION (MICROBIAL INFECTION)</scope>
</reference>
<reference key="9">
    <citation type="journal article" date="2009" name="Sci. Signal.">
        <title>Quantitative phosphoproteomic analysis of T cell receptor signaling reveals system-wide modulation of protein-protein interactions.</title>
        <authorList>
            <person name="Mayya V."/>
            <person name="Lundgren D.H."/>
            <person name="Hwang S.-I."/>
            <person name="Rezaul K."/>
            <person name="Wu L."/>
            <person name="Eng J.K."/>
            <person name="Rodionov V."/>
            <person name="Han D.K."/>
        </authorList>
    </citation>
    <scope>IDENTIFICATION BY MASS SPECTROMETRY [LARGE SCALE ANALYSIS]</scope>
    <source>
        <tissue>Leukemic T-cell</tissue>
    </source>
</reference>
<reference key="10">
    <citation type="journal article" date="2010" name="Mol. Cell. Biol.">
        <title>Human Pat1b connects deadenylation with mRNA decapping and controls the assembly of processing bodies.</title>
        <authorList>
            <person name="Ozgur S."/>
            <person name="Chekulaeva M."/>
            <person name="Stoecklin G."/>
        </authorList>
    </citation>
    <scope>FUNCTION</scope>
    <scope>SUBCELLULAR LOCATION</scope>
    <scope>DOMAIN REGION A</scope>
    <scope>INTERACTION WITH THE CCR4-NOT COMPLEX</scope>
    <scope>INTERACTION WITH DCP1A; DCP2; DDX6; EDC3; EDC4; LSM1; LSM4 AND XRN1</scope>
</reference>
<reference key="11">
    <citation type="journal article" date="2010" name="RNA">
        <title>Distinct functions of maternal and somatic Pat1 protein paralogs.</title>
        <authorList>
            <person name="Marnef A."/>
            <person name="Maldonado M."/>
            <person name="Bugaut A."/>
            <person name="Balasubramanian S."/>
            <person name="Kress M."/>
            <person name="Weil D."/>
            <person name="Standart N."/>
        </authorList>
    </citation>
    <scope>RNA-BINDING</scope>
    <scope>SUBCELLULAR LOCATION</scope>
</reference>
<reference key="12">
    <citation type="journal article" date="2011" name="BMC Syst. Biol.">
        <title>Initial characterization of the human central proteome.</title>
        <authorList>
            <person name="Burkard T.R."/>
            <person name="Planyavsky M."/>
            <person name="Kaupe I."/>
            <person name="Breitwieser F.P."/>
            <person name="Buerckstuemmer T."/>
            <person name="Bennett K.L."/>
            <person name="Superti-Furga G."/>
            <person name="Colinge J."/>
        </authorList>
    </citation>
    <scope>IDENTIFICATION BY MASS SPECTROMETRY [LARGE SCALE ANALYSIS]</scope>
</reference>
<reference key="13">
    <citation type="journal article" date="2011" name="Nucleic Acids Res.">
        <title>The human Pat1b protein: a novel mRNA deadenylation factor identified by a new immunoprecipitation technique.</title>
        <authorList>
            <person name="Totaro A."/>
            <person name="Renzi F."/>
            <person name="La Fata G."/>
            <person name="Mattioli C."/>
            <person name="Raabe M."/>
            <person name="Urlaub H."/>
            <person name="Achsel T."/>
        </authorList>
    </citation>
    <scope>FUNCTION</scope>
    <scope>SUBCELLULAR LOCATION</scope>
    <scope>INTERACTION WITH LSM1</scope>
</reference>
<reference key="14">
    <citation type="journal article" date="2011" name="Sci. Signal.">
        <title>System-wide temporal characterization of the proteome and phosphoproteome of human embryonic stem cell differentiation.</title>
        <authorList>
            <person name="Rigbolt K.T."/>
            <person name="Prokhorova T.A."/>
            <person name="Akimov V."/>
            <person name="Henningsen J."/>
            <person name="Johansen P.T."/>
            <person name="Kratchmarova I."/>
            <person name="Kassem M."/>
            <person name="Mann M."/>
            <person name="Olsen J.V."/>
            <person name="Blagoev B."/>
        </authorList>
    </citation>
    <scope>PHOSPHORYLATION [LARGE SCALE ANALYSIS] AT SER-179 AND SER-184</scope>
    <scope>IDENTIFICATION BY MASS SPECTROMETRY [LARGE SCALE ANALYSIS]</scope>
</reference>
<reference key="15">
    <citation type="journal article" date="2012" name="Mol. Biol. Cell">
        <title>RNA-related nuclear functions of human Pat1b, the P-body mRNA decay factor.</title>
        <authorList>
            <person name="Marnef A."/>
            <person name="Weil D."/>
            <person name="Standart N."/>
        </authorList>
    </citation>
    <scope>RNA-BINDING</scope>
    <scope>SUBCELLULAR LOCATION</scope>
    <scope>NUCLEAR EXPORT SIGNAL</scope>
    <scope>MUTAGENESIS OF LEU-86; LEU-90; MET-93 AND ILE-95</scope>
</reference>
<reference key="16">
    <citation type="journal article" date="2013" name="J. Proteome Res.">
        <title>Toward a comprehensive characterization of a human cancer cell phosphoproteome.</title>
        <authorList>
            <person name="Zhou H."/>
            <person name="Di Palma S."/>
            <person name="Preisinger C."/>
            <person name="Peng M."/>
            <person name="Polat A.N."/>
            <person name="Heck A.J."/>
            <person name="Mohammed S."/>
        </authorList>
    </citation>
    <scope>PHOSPHORYLATION [LARGE SCALE ANALYSIS] AT SER-179; SER-184; THR-194 AND SER-278</scope>
    <scope>IDENTIFICATION BY MASS SPECTROMETRY [LARGE SCALE ANALYSIS]</scope>
    <source>
        <tissue>Cervix carcinoma</tissue>
        <tissue>Erythroleukemia</tissue>
    </source>
</reference>
<reference key="17">
    <citation type="journal article" date="2014" name="J. Proteomics">
        <title>An enzyme assisted RP-RPLC approach for in-depth analysis of human liver phosphoproteome.</title>
        <authorList>
            <person name="Bian Y."/>
            <person name="Song C."/>
            <person name="Cheng K."/>
            <person name="Dong M."/>
            <person name="Wang F."/>
            <person name="Huang J."/>
            <person name="Sun D."/>
            <person name="Wang L."/>
            <person name="Ye M."/>
            <person name="Zou H."/>
        </authorList>
    </citation>
    <scope>IDENTIFICATION BY MASS SPECTROMETRY [LARGE SCALE ANALYSIS]</scope>
    <source>
        <tissue>Liver</tissue>
    </source>
</reference>
<reference key="18">
    <citation type="journal article" date="2014" name="Mol. Cell. Proteomics">
        <title>Immunoaffinity enrichment and mass spectrometry analysis of protein methylation.</title>
        <authorList>
            <person name="Guo A."/>
            <person name="Gu H."/>
            <person name="Zhou J."/>
            <person name="Mulhern D."/>
            <person name="Wang Y."/>
            <person name="Lee K.A."/>
            <person name="Yang V."/>
            <person name="Aguiar M."/>
            <person name="Kornhauser J."/>
            <person name="Jia X."/>
            <person name="Ren J."/>
            <person name="Beausoleil S.A."/>
            <person name="Silva J.C."/>
            <person name="Vemulapalli V."/>
            <person name="Bedford M.T."/>
            <person name="Comb M.J."/>
        </authorList>
    </citation>
    <scope>METHYLATION [LARGE SCALE ANALYSIS] AT ARG-217; ARG-223 AND ARG-263</scope>
    <scope>IDENTIFICATION BY MASS SPECTROMETRY [LARGE SCALE ANALYSIS]</scope>
    <source>
        <tissue>Colon carcinoma</tissue>
    </source>
</reference>
<reference key="19">
    <citation type="journal article" date="2015" name="Cell Rep.">
        <title>The eIF4E-Binding protein 4E-T is a component of the mRNA decay machinery that bridges the 5' and 3' termini of target mRNAs.</title>
        <authorList>
            <person name="Nishimura T."/>
            <person name="Padamsi Z."/>
            <person name="Fakim H."/>
            <person name="Milette S."/>
            <person name="Dunham W.H."/>
            <person name="Gingras A.C."/>
            <person name="Fabian M.R."/>
        </authorList>
    </citation>
    <scope>INTERACTION WITH EIF4ENIF1</scope>
</reference>
<reference key="20">
    <citation type="journal article" date="2019" name="Am. J. Hum. Genet.">
        <title>Rare de novo missense variants in RNA helicase DDX6 cause intellectual disability and dysmorphic features and lead to P-body defects and RNA dysregulation.</title>
        <authorList>
            <person name="Balak C."/>
            <person name="Benard M."/>
            <person name="Schaefer E."/>
            <person name="Iqbal S."/>
            <person name="Ramsey K."/>
            <person name="Ernoult-Lange M."/>
            <person name="Mattioli F."/>
            <person name="Llaci L."/>
            <person name="Geoffroy V."/>
            <person name="Courel M."/>
            <person name="Naymik M."/>
            <person name="Bachman K.K."/>
            <person name="Pfundt R."/>
            <person name="Rump P."/>
            <person name="Ter Beest J."/>
            <person name="Wentzensen I.M."/>
            <person name="Monaghan K.G."/>
            <person name="McWalter K."/>
            <person name="Richholt R."/>
            <person name="Le Bechec A."/>
            <person name="Jepsen W."/>
            <person name="De Both M."/>
            <person name="Belnap N."/>
            <person name="Boland A."/>
            <person name="Piras I.S."/>
            <person name="Deleuze J.F."/>
            <person name="Szelinger S."/>
            <person name="Dollfus H."/>
            <person name="Chelly J."/>
            <person name="Muller J."/>
            <person name="Campbell A."/>
            <person name="Lal D."/>
            <person name="Rangasamy S."/>
            <person name="Mandel J.L."/>
            <person name="Narayanan V."/>
            <person name="Huentelman M."/>
            <person name="Weil D."/>
            <person name="Piton A."/>
        </authorList>
    </citation>
    <scope>INTERACTION WITH DDX6</scope>
</reference>
<reference key="21">
    <citation type="journal article" date="2019" name="Genes Dev.">
        <title>Molecular basis for GIGYF-Me31B complex assembly in 4EHP-mediated translational repression.</title>
        <authorList>
            <person name="Peter D."/>
            <person name="Ruscica V."/>
            <person name="Bawankar P."/>
            <person name="Weber R."/>
            <person name="Helms S."/>
            <person name="Valkov E."/>
            <person name="Igreja C."/>
            <person name="Izaurralde E."/>
        </authorList>
    </citation>
    <scope>INTERACTION WITH DDX6</scope>
</reference>
<reference key="22">
    <citation type="journal article" date="2020" name="Genes Dev.">
        <title>4E-T-bound mRNAs are stored in a silenced and deadenylated form.</title>
        <authorList>
            <person name="Raesch F."/>
            <person name="Weber R."/>
            <person name="Izaurralde E."/>
            <person name="Igreja C."/>
        </authorList>
    </citation>
    <scope>SUBCELLULAR LOCATION</scope>
    <scope>INTERACTION WITH EIF4ENIF1</scope>
</reference>
<reference key="23">
    <citation type="journal article" date="2010" name="EMBO J.">
        <title>The C-terminal alpha-alpha superhelix of Pat is required for mRNA decapping in metazoa.</title>
        <authorList>
            <person name="Braun J.E."/>
            <person name="Tritschler F."/>
            <person name="Haas G."/>
            <person name="Igreja C."/>
            <person name="Truffault V."/>
            <person name="Weichenrieder O."/>
            <person name="Izaurralde E."/>
        </authorList>
    </citation>
    <scope>X-RAY CRYSTALLOGRAPHY (3.1 ANGSTROMS) OF 517-767</scope>
    <scope>RNA-BINDING</scope>
    <scope>FUNCTION</scope>
    <scope>SUBCELLULAR LOCATION</scope>
    <scope>DOMAIN REGION C</scope>
    <scope>INTERACTION WITH THE LSM-CONTAINING SMN-SM PROTEIN COMPLEX</scope>
    <scope>INTERACTION WITH DCP2; DDX6 AND EDC4</scope>
    <scope>MUTAGENESIS OF ARG-519; ARG-520; LEU-523; GLU-527; TYR-530; LEU-534; 539-TYR--ASP-557; ARG-591; ARG-595; LYS-625 AND LYS-626</scope>
</reference>
<gene>
    <name type="primary">PATL1</name>
    <name type="ORF">OK/KNS-cl.5</name>
</gene>
<dbReference type="EMBL" id="AB065087">
    <property type="protein sequence ID" value="BAB93524.1"/>
    <property type="molecule type" value="mRNA"/>
</dbReference>
<dbReference type="EMBL" id="AK094193">
    <property type="protein sequence ID" value="BAC04305.1"/>
    <property type="molecule type" value="mRNA"/>
</dbReference>
<dbReference type="EMBL" id="AK127943">
    <property type="protein sequence ID" value="BAG54601.1"/>
    <property type="molecule type" value="mRNA"/>
</dbReference>
<dbReference type="EMBL" id="AL831992">
    <property type="protein sequence ID" value="CAD89916.1"/>
    <property type="status" value="ALT_INIT"/>
    <property type="molecule type" value="mRNA"/>
</dbReference>
<dbReference type="EMBL" id="AP000442">
    <property type="status" value="NOT_ANNOTATED_CDS"/>
    <property type="molecule type" value="Genomic_DNA"/>
</dbReference>
<dbReference type="EMBL" id="AP000640">
    <property type="status" value="NOT_ANNOTATED_CDS"/>
    <property type="molecule type" value="Genomic_DNA"/>
</dbReference>
<dbReference type="EMBL" id="BC065264">
    <property type="protein sequence ID" value="AAH65264.2"/>
    <property type="molecule type" value="mRNA"/>
</dbReference>
<dbReference type="EMBL" id="BC109038">
    <property type="protein sequence ID" value="AAI09039.1"/>
    <property type="molecule type" value="mRNA"/>
</dbReference>
<dbReference type="EMBL" id="BC109039">
    <property type="protein sequence ID" value="AAI09040.1"/>
    <property type="molecule type" value="mRNA"/>
</dbReference>
<dbReference type="EMBL" id="BC111047">
    <property type="protein sequence ID" value="AAI11048.1"/>
    <property type="molecule type" value="mRNA"/>
</dbReference>
<dbReference type="CCDS" id="CCDS44613.1">
    <molecule id="Q86TB9-1"/>
</dbReference>
<dbReference type="RefSeq" id="NP_689929.2">
    <molecule id="Q86TB9-1"/>
    <property type="nucleotide sequence ID" value="NM_152716.3"/>
</dbReference>
<dbReference type="PDB" id="2XEQ">
    <property type="method" value="X-ray"/>
    <property type="resolution" value="3.10 A"/>
    <property type="chains" value="A/B/C/D=517-767"/>
</dbReference>
<dbReference type="PDB" id="2XER">
    <property type="method" value="X-ray"/>
    <property type="resolution" value="2.95 A"/>
    <property type="chains" value="A/B/C=517-767"/>
</dbReference>
<dbReference type="PDB" id="2XES">
    <property type="method" value="X-ray"/>
    <property type="resolution" value="2.10 A"/>
    <property type="chains" value="A/B=517-767"/>
</dbReference>
<dbReference type="PDBsum" id="2XEQ"/>
<dbReference type="PDBsum" id="2XER"/>
<dbReference type="PDBsum" id="2XES"/>
<dbReference type="SMR" id="Q86TB9"/>
<dbReference type="BioGRID" id="128613">
    <property type="interactions" value="194"/>
</dbReference>
<dbReference type="FunCoup" id="Q86TB9">
    <property type="interactions" value="2042"/>
</dbReference>
<dbReference type="IntAct" id="Q86TB9">
    <property type="interactions" value="56"/>
</dbReference>
<dbReference type="STRING" id="9606.ENSP00000300146"/>
<dbReference type="GlyGen" id="Q86TB9">
    <property type="glycosylation" value="3 sites, 1 O-linked glycan (1 site)"/>
</dbReference>
<dbReference type="iPTMnet" id="Q86TB9"/>
<dbReference type="MetOSite" id="Q86TB9"/>
<dbReference type="PhosphoSitePlus" id="Q86TB9"/>
<dbReference type="BioMuta" id="PATL1"/>
<dbReference type="DMDM" id="182705251"/>
<dbReference type="jPOST" id="Q86TB9"/>
<dbReference type="MassIVE" id="Q86TB9"/>
<dbReference type="PaxDb" id="9606-ENSP00000300146"/>
<dbReference type="PeptideAtlas" id="Q86TB9"/>
<dbReference type="ProteomicsDB" id="69679">
    <molecule id="Q86TB9-1"/>
</dbReference>
<dbReference type="ProteomicsDB" id="69680">
    <molecule id="Q86TB9-2"/>
</dbReference>
<dbReference type="ProteomicsDB" id="69681">
    <molecule id="Q86TB9-3"/>
</dbReference>
<dbReference type="ProteomicsDB" id="69682">
    <molecule id="Q86TB9-4"/>
</dbReference>
<dbReference type="Pumba" id="Q86TB9"/>
<dbReference type="Antibodypedia" id="49853">
    <property type="antibodies" value="87 antibodies from 19 providers"/>
</dbReference>
<dbReference type="DNASU" id="219988"/>
<dbReference type="Ensembl" id="ENST00000300146.10">
    <molecule id="Q86TB9-1"/>
    <property type="protein sequence ID" value="ENSP00000300146.9"/>
    <property type="gene ID" value="ENSG00000166889.14"/>
</dbReference>
<dbReference type="GeneID" id="219988"/>
<dbReference type="KEGG" id="hsa:219988"/>
<dbReference type="MANE-Select" id="ENST00000300146.10">
    <property type="protein sequence ID" value="ENSP00000300146.9"/>
    <property type="RefSeq nucleotide sequence ID" value="NM_152716.3"/>
    <property type="RefSeq protein sequence ID" value="NP_689929.2"/>
</dbReference>
<dbReference type="UCSC" id="uc001noe.6">
    <molecule id="Q86TB9-1"/>
    <property type="organism name" value="human"/>
</dbReference>
<dbReference type="AGR" id="HGNC:26721"/>
<dbReference type="CTD" id="219988"/>
<dbReference type="GeneCards" id="PATL1"/>
<dbReference type="HGNC" id="HGNC:26721">
    <property type="gene designation" value="PATL1"/>
</dbReference>
<dbReference type="HPA" id="ENSG00000166889">
    <property type="expression patterns" value="Low tissue specificity"/>
</dbReference>
<dbReference type="MIM" id="614660">
    <property type="type" value="gene"/>
</dbReference>
<dbReference type="neXtProt" id="NX_Q86TB9"/>
<dbReference type="OpenTargets" id="ENSG00000166889"/>
<dbReference type="PharmGKB" id="PA162398769"/>
<dbReference type="VEuPathDB" id="HostDB:ENSG00000166889"/>
<dbReference type="eggNOG" id="KOG4592">
    <property type="taxonomic scope" value="Eukaryota"/>
</dbReference>
<dbReference type="GeneTree" id="ENSGT00520000055649"/>
<dbReference type="HOGENOM" id="CLU_009778_1_0_1"/>
<dbReference type="InParanoid" id="Q86TB9"/>
<dbReference type="OMA" id="QAPMFRA"/>
<dbReference type="OrthoDB" id="74835at2759"/>
<dbReference type="PAN-GO" id="Q86TB9">
    <property type="GO annotations" value="4 GO annotations based on evolutionary models"/>
</dbReference>
<dbReference type="PhylomeDB" id="Q86TB9"/>
<dbReference type="TreeFam" id="TF323322"/>
<dbReference type="PathwayCommons" id="Q86TB9"/>
<dbReference type="Reactome" id="R-HSA-430039">
    <property type="pathway name" value="mRNA decay by 5' to 3' exoribonuclease"/>
</dbReference>
<dbReference type="SignaLink" id="Q86TB9"/>
<dbReference type="BioGRID-ORCS" id="219988">
    <property type="hits" value="18 hits in 1168 CRISPR screens"/>
</dbReference>
<dbReference type="CD-CODE" id="232F8A39">
    <property type="entry name" value="P-body"/>
</dbReference>
<dbReference type="CD-CODE" id="6F24707C">
    <property type="entry name" value="Cajal body"/>
</dbReference>
<dbReference type="CD-CODE" id="DEE660B4">
    <property type="entry name" value="Stress granule"/>
</dbReference>
<dbReference type="ChiTaRS" id="PATL1">
    <property type="organism name" value="human"/>
</dbReference>
<dbReference type="EvolutionaryTrace" id="Q86TB9"/>
<dbReference type="GenomeRNAi" id="219988"/>
<dbReference type="Pharos" id="Q86TB9">
    <property type="development level" value="Tbio"/>
</dbReference>
<dbReference type="PRO" id="PR:Q86TB9"/>
<dbReference type="Proteomes" id="UP000005640">
    <property type="component" value="Chromosome 11"/>
</dbReference>
<dbReference type="RNAct" id="Q86TB9">
    <property type="molecule type" value="protein"/>
</dbReference>
<dbReference type="Bgee" id="ENSG00000166889">
    <property type="expression patterns" value="Expressed in ileal mucosa and 177 other cell types or tissues"/>
</dbReference>
<dbReference type="GO" id="GO:0036464">
    <property type="term" value="C:cytoplasmic ribonucleoprotein granule"/>
    <property type="evidence" value="ECO:0000314"/>
    <property type="project" value="HPA"/>
</dbReference>
<dbReference type="GO" id="GO:0005829">
    <property type="term" value="C:cytosol"/>
    <property type="evidence" value="ECO:0000314"/>
    <property type="project" value="HPA"/>
</dbReference>
<dbReference type="GO" id="GO:0016607">
    <property type="term" value="C:nuclear speck"/>
    <property type="evidence" value="ECO:0007669"/>
    <property type="project" value="UniProtKB-SubCell"/>
</dbReference>
<dbReference type="GO" id="GO:0000932">
    <property type="term" value="C:P-body"/>
    <property type="evidence" value="ECO:0000314"/>
    <property type="project" value="UniProtKB"/>
</dbReference>
<dbReference type="GO" id="GO:0016605">
    <property type="term" value="C:PML body"/>
    <property type="evidence" value="ECO:0007669"/>
    <property type="project" value="UniProtKB-SubCell"/>
</dbReference>
<dbReference type="GO" id="GO:0034046">
    <property type="term" value="F:poly(G) binding"/>
    <property type="evidence" value="ECO:0000314"/>
    <property type="project" value="MGI"/>
</dbReference>
<dbReference type="GO" id="GO:0008266">
    <property type="term" value="F:poly(U) RNA binding"/>
    <property type="evidence" value="ECO:0000314"/>
    <property type="project" value="MGI"/>
</dbReference>
<dbReference type="GO" id="GO:0003723">
    <property type="term" value="F:RNA binding"/>
    <property type="evidence" value="ECO:0000314"/>
    <property type="project" value="UniProtKB"/>
</dbReference>
<dbReference type="GO" id="GO:0000290">
    <property type="term" value="P:deadenylation-dependent decapping of nuclear-transcribed mRNA"/>
    <property type="evidence" value="ECO:0000314"/>
    <property type="project" value="UniProtKB"/>
</dbReference>
<dbReference type="GO" id="GO:0033962">
    <property type="term" value="P:P-body assembly"/>
    <property type="evidence" value="ECO:0000314"/>
    <property type="project" value="UniProtKB"/>
</dbReference>
<dbReference type="InterPro" id="IPR039900">
    <property type="entry name" value="Pat1-like"/>
</dbReference>
<dbReference type="InterPro" id="IPR019167">
    <property type="entry name" value="PAT1_dom"/>
</dbReference>
<dbReference type="PANTHER" id="PTHR21551:SF2">
    <property type="entry name" value="PROTEIN PAT1 HOMOLOG 1"/>
    <property type="match status" value="1"/>
</dbReference>
<dbReference type="PANTHER" id="PTHR21551">
    <property type="entry name" value="TOPOISOMERASE II-ASSOCIATED PROTEIN PAT1"/>
    <property type="match status" value="1"/>
</dbReference>
<dbReference type="Pfam" id="PF09770">
    <property type="entry name" value="PAT1"/>
    <property type="match status" value="1"/>
</dbReference>
<keyword id="KW-0002">3D-structure</keyword>
<keyword id="KW-0025">Alternative splicing</keyword>
<keyword id="KW-0963">Cytoplasm</keyword>
<keyword id="KW-0488">Methylation</keyword>
<keyword id="KW-0539">Nucleus</keyword>
<keyword id="KW-0597">Phosphoprotein</keyword>
<keyword id="KW-1267">Proteomics identification</keyword>
<keyword id="KW-1185">Reference proteome</keyword>
<keyword id="KW-0694">RNA-binding</keyword>
<comment type="function">
    <text evidence="3 5 6 8">RNA-binding protein involved in deadenylation-dependent decapping of mRNAs, leading to the degradation of mRNAs (PubMed:17936923, PubMed:20543818, PubMed:20584987, PubMed:20852261). Acts as a scaffold protein that connects deadenylation and decapping machinery (PubMed:17936923, PubMed:20543818, PubMed:20584987, PubMed:20852261). Required for cytoplasmic mRNA processing body (P-body) assembly (PubMed:17936923, PubMed:20543818, PubMed:20584987, PubMed:20852261).</text>
</comment>
<comment type="function">
    <text evidence="4">(Microbial infection) In case of infection, required for translation and replication of hepatitis C virus (HCV).</text>
</comment>
<comment type="subunit">
    <text evidence="5 6 8 10 11 12 13">Interacts (via region A) with DDX6/RCK (PubMed:20543818, PubMed:20584987, PubMed:31422817, PubMed:31439631). Interacts (via region H and region C) with LSM1 and LSM4 (PubMed:20584987, PubMed:20852261). Interacts (via region N) with DCP1A, DCP2, EDC3, EDC4 and XRN1 (PubMed:20543818, PubMed:20584987). Interacts with the CCR4-NOT complex (PubMed:20584987). Interacts with the Lsm-containing SMN-Sm protein complex (PubMed:20543818). Interacts with EIF4ENIF1/4E-T (PubMed:26027925, PubMed:32354837).</text>
</comment>
<comment type="interaction">
    <interactant intactId="EBI-2562092">
        <id>Q86TB9</id>
    </interactant>
    <interactant intactId="EBI-1222758">
        <id>A5YKK6</id>
        <label>CNOT1</label>
    </interactant>
    <organismsDiffer>false</organismsDiffer>
    <experiments>3</experiments>
</comment>
<comment type="interaction">
    <interactant intactId="EBI-2562092">
        <id>Q86TB9</id>
    </interactant>
    <interactant intactId="EBI-2104530">
        <id>Q9ULM6</id>
        <label>CNOT6</label>
    </interactant>
    <organismsDiffer>false</organismsDiffer>
    <experiments>3</experiments>
</comment>
<comment type="interaction">
    <interactant intactId="EBI-2562092">
        <id>Q86TB9</id>
    </interactant>
    <interactant intactId="EBI-2105113">
        <id>Q9UIV1</id>
        <label>CNOT7</label>
    </interactant>
    <organismsDiffer>false</organismsDiffer>
    <experiments>5</experiments>
</comment>
<comment type="interaction">
    <interactant intactId="EBI-2562092">
        <id>Q86TB9</id>
    </interactant>
    <interactant intactId="EBI-742299">
        <id>Q9UFF9</id>
        <label>CNOT8</label>
    </interactant>
    <organismsDiffer>false</organismsDiffer>
    <experiments>3</experiments>
</comment>
<comment type="interaction">
    <interactant intactId="EBI-2562092">
        <id>Q86TB9</id>
    </interactant>
    <interactant intactId="EBI-374238">
        <id>Q9NPI6</id>
        <label>DCP1A</label>
    </interactant>
    <organismsDiffer>false</organismsDiffer>
    <experiments>2</experiments>
</comment>
<comment type="interaction">
    <interactant intactId="EBI-2562092">
        <id>Q86TB9</id>
    </interactant>
    <interactant intactId="EBI-351257">
        <id>P26196</id>
        <label>DDX6</label>
    </interactant>
    <organismsDiffer>false</organismsDiffer>
    <experiments>17</experiments>
</comment>
<comment type="interaction">
    <interactant intactId="EBI-2562092">
        <id>Q86TB9</id>
    </interactant>
    <interactant intactId="EBI-741101">
        <id>Q13643</id>
        <label>FHL3</label>
    </interactant>
    <organismsDiffer>false</organismsDiffer>
    <experiments>8</experiments>
</comment>
<comment type="interaction">
    <interactant intactId="EBI-2562092">
        <id>Q86TB9</id>
    </interactant>
    <interactant intactId="EBI-618309">
        <id>Q08379</id>
        <label>GOLGA2</label>
    </interactant>
    <organismsDiffer>false</organismsDiffer>
    <experiments>6</experiments>
</comment>
<comment type="interaction">
    <interactant intactId="EBI-2562092">
        <id>Q86TB9</id>
    </interactant>
    <interactant intactId="EBI-11962084">
        <id>Q3LI66</id>
        <label>KRTAP6-2</label>
    </interactant>
    <organismsDiffer>false</organismsDiffer>
    <experiments>3</experiments>
</comment>
<comment type="interaction">
    <interactant intactId="EBI-2562092">
        <id>Q86TB9</id>
    </interactant>
    <interactant intactId="EBI-347619">
        <id>O15116</id>
        <label>LSM1</label>
    </interactant>
    <organismsDiffer>false</organismsDiffer>
    <experiments>19</experiments>
</comment>
<comment type="interaction">
    <interactant intactId="EBI-2562092">
        <id>Q86TB9</id>
    </interactant>
    <interactant intactId="EBI-347416">
        <id>Q9Y333</id>
        <label>LSM2</label>
    </interactant>
    <organismsDiffer>false</organismsDiffer>
    <experiments>3</experiments>
</comment>
<comment type="interaction">
    <interactant intactId="EBI-2562092">
        <id>Q86TB9</id>
    </interactant>
    <interactant intactId="EBI-373310">
        <id>P62312</id>
        <label>LSM6</label>
    </interactant>
    <organismsDiffer>false</organismsDiffer>
    <experiments>5</experiments>
</comment>
<comment type="interaction">
    <interactant intactId="EBI-2562092">
        <id>Q86TB9</id>
    </interactant>
    <interactant intactId="EBI-10271199">
        <id>Q8NI38</id>
        <label>NFKBID</label>
    </interactant>
    <organismsDiffer>false</organismsDiffer>
    <experiments>3</experiments>
</comment>
<comment type="interaction">
    <interactant intactId="EBI-2562092">
        <id>Q86TB9</id>
    </interactant>
    <interactant intactId="EBI-348380">
        <id>P25788</id>
        <label>PSMA3</label>
    </interactant>
    <organismsDiffer>false</organismsDiffer>
    <experiments>3</experiments>
</comment>
<comment type="interaction">
    <interactant intactId="EBI-2562092">
        <id>Q86TB9</id>
    </interactant>
    <interactant intactId="EBI-12806590">
        <id>Q86WV8</id>
        <label>TSC1</label>
    </interactant>
    <organismsDiffer>false</organismsDiffer>
    <experiments>3</experiments>
</comment>
<comment type="interaction">
    <interactant intactId="EBI-2562092">
        <id>Q86TB9</id>
    </interactant>
    <interactant intactId="EBI-12040603">
        <id>Q9NZC7-5</id>
        <label>WWOX</label>
    </interactant>
    <organismsDiffer>false</organismsDiffer>
    <experiments>5</experiments>
</comment>
<comment type="interaction">
    <interactant intactId="EBI-2562092">
        <id>Q86TB9</id>
    </interactant>
    <interactant intactId="EBI-12030590">
        <id>Q9H0C1</id>
        <label>ZMYND12</label>
    </interactant>
    <organismsDiffer>false</organismsDiffer>
    <experiments>3</experiments>
</comment>
<comment type="subcellular location">
    <subcellularLocation>
        <location evidence="3 5 6 7 8 9 13">Cytoplasm</location>
        <location evidence="3 5 6 7 8 9 13">P-body</location>
    </subcellularLocation>
    <subcellularLocation>
        <location evidence="9">Nucleus</location>
    </subcellularLocation>
    <subcellularLocation>
        <location evidence="9">Nucleus</location>
        <location evidence="9">PML body</location>
    </subcellularLocation>
    <subcellularLocation>
        <location evidence="9">Nucleus speckle</location>
    </subcellularLocation>
    <text evidence="9">Predominantly cytoplasmic (PubMed:22090346). Shuttles between the nucleus and the cytoplasm in a CRM1-dependent manner (PubMed:22090346). Enriched in splicing speckles. Localization to nuclear foci and speckles requires active transcription. Excluded from the nucleolus (PubMed:22090346).</text>
</comment>
<comment type="alternative products">
    <event type="alternative splicing"/>
    <isoform>
        <id>Q86TB9-1</id>
        <name>1</name>
        <sequence type="displayed"/>
    </isoform>
    <isoform>
        <id>Q86TB9-2</id>
        <name>2</name>
        <sequence type="described" ref="VSP_031778"/>
    </isoform>
    <isoform>
        <id>Q86TB9-3</id>
        <name>3</name>
        <sequence type="described" ref="VSP_031777"/>
    </isoform>
    <isoform>
        <id>Q86TB9-4</id>
        <name>4</name>
        <sequence type="described" ref="VSP_040576 VSP_040577"/>
    </isoform>
</comment>
<comment type="tissue specificity">
    <text evidence="3">Ubiquitous.</text>
</comment>
<comment type="domain">
    <text>The region A, also named N-term, mediates the interaction with DDX6/RCK and is required for cytoplasmic mRNA processing body assembly.</text>
</comment>
<comment type="domain">
    <text>The region C, also named Pat-C, is required for RNA-binding and mediates the binding with the Lsm-containing SMN-Sm protein complex and the decapping machinery. It folds into an alpha-alpha superhelix, exposing conserved and basic residues on one side of the domain.</text>
</comment>
<comment type="similarity">
    <text evidence="17">Belongs to the PAT1 family.</text>
</comment>
<comment type="sequence caution" evidence="17">
    <conflict type="erroneous initiation">
        <sequence resource="EMBL-CDS" id="CAD89916"/>
    </conflict>
    <text>Extended N-terminus.</text>
</comment>
<accession>Q86TB9</accession>
<accession>B3KXT9</accession>
<accession>Q2TA86</accession>
<accession>Q6P166</accession>
<accession>Q8N9M6</accession>
<accession>Q8NI63</accession>
<evidence type="ECO:0000250" key="1">
    <source>
        <dbReference type="UniProtKB" id="Q3TC46"/>
    </source>
</evidence>
<evidence type="ECO:0000256" key="2">
    <source>
        <dbReference type="SAM" id="MobiDB-lite"/>
    </source>
</evidence>
<evidence type="ECO:0000269" key="3">
    <source>
    </source>
</evidence>
<evidence type="ECO:0000269" key="4">
    <source>
    </source>
</evidence>
<evidence type="ECO:0000269" key="5">
    <source>
    </source>
</evidence>
<evidence type="ECO:0000269" key="6">
    <source>
    </source>
</evidence>
<evidence type="ECO:0000269" key="7">
    <source>
    </source>
</evidence>
<evidence type="ECO:0000269" key="8">
    <source>
    </source>
</evidence>
<evidence type="ECO:0000269" key="9">
    <source>
    </source>
</evidence>
<evidence type="ECO:0000269" key="10">
    <source>
    </source>
</evidence>
<evidence type="ECO:0000269" key="11">
    <source>
    </source>
</evidence>
<evidence type="ECO:0000269" key="12">
    <source>
    </source>
</evidence>
<evidence type="ECO:0000269" key="13">
    <source>
    </source>
</evidence>
<evidence type="ECO:0000303" key="14">
    <source>
    </source>
</evidence>
<evidence type="ECO:0000303" key="15">
    <source>
    </source>
</evidence>
<evidence type="ECO:0000303" key="16">
    <source ref="1"/>
</evidence>
<evidence type="ECO:0000305" key="17"/>
<evidence type="ECO:0007744" key="18">
    <source>
    </source>
</evidence>
<evidence type="ECO:0007744" key="19">
    <source>
    </source>
</evidence>
<evidence type="ECO:0007744" key="20">
    <source>
    </source>
</evidence>
<evidence type="ECO:0007744" key="21">
    <source>
    </source>
</evidence>
<evidence type="ECO:0007829" key="22">
    <source>
        <dbReference type="PDB" id="2XEQ"/>
    </source>
</evidence>
<evidence type="ECO:0007829" key="23">
    <source>
        <dbReference type="PDB" id="2XES"/>
    </source>
</evidence>
<sequence length="770" mass="86850">MFRYESLEDCPLDEDEDAFQGLGEEDEEIDQFNDDTFGSGAVDDDWQEAHERLAELEEKLPVAVNEQTGNGERDEMDLLGDHEENLAERLSKMVIENELEDPAIMRAVQTRPVLQPQPGSLNSSIWDGSEVLRRIRGPLLAQEMPTVSVLEYALPQRPPQGPEDDRDLSERALPRRSTSPIIGSPPVRAVPIGTPPKQMAVPSFTQQILCPKPVHVRPPMPPRYPAPYGERMSPNQLCSVPNSSLLGHPFPPSVPPVLSPLQRAQLLGGAQLQPGRMSPSQFARVPGFVGSPLAAMNPKLLQGRVGQMLPPAPGFRAFFSAPPSATPPPQQHPPGPGPHLQNLRSQAPMFRPDTTHLHPQHRRLLHQRQQQNRSQHRNLNGAGDRGSHRSSHQDHLRKDPYANLMLQREKDWVSKIQMMQLQSTDPYLDDFYYQNYFEKLEKLSAAEEIQGDGPKKERTKLITPQVAKLEHAYKPVQFEGSLGKLTVSSVNNPRKMIDAVVTSRSEDDETKEKQVRDKRRKTLVIIEKTYSLLLDVEDYERRYLLSLEEERPALMDDRKHKICSMYDNLRGKLPGQERPSDDHFVQIMCIRKGKRMVARILPFLSTEQAADILMTTARNLPFLIKKDAQDEVLPCLLSPFSLLLYHLPSVSITSLLRQLMNLPQSAATPALSNPHLTAVLQNKFGLSLLLILLSRGEDLQSSDPATESTQNNQWTEVMFMATRELLRIPQAALAKPISIPTNLVSLFSRYVDRQKLNLLETKLQLVQGIR</sequence>
<proteinExistence type="evidence at protein level"/>